<reference key="1">
    <citation type="journal article" date="2008" name="BMC Genomics">
        <title>The missing link: Bordetella petrii is endowed with both the metabolic versatility of environmental bacteria and virulence traits of pathogenic Bordetellae.</title>
        <authorList>
            <person name="Gross R."/>
            <person name="Guzman C.A."/>
            <person name="Sebaihia M."/>
            <person name="Martin dos Santos V.A.P."/>
            <person name="Pieper D.H."/>
            <person name="Koebnik R."/>
            <person name="Lechner M."/>
            <person name="Bartels D."/>
            <person name="Buhrmester J."/>
            <person name="Choudhuri J.V."/>
            <person name="Ebensen T."/>
            <person name="Gaigalat L."/>
            <person name="Herrmann S."/>
            <person name="Khachane A.N."/>
            <person name="Larisch C."/>
            <person name="Link S."/>
            <person name="Linke B."/>
            <person name="Meyer F."/>
            <person name="Mormann S."/>
            <person name="Nakunst D."/>
            <person name="Rueckert C."/>
            <person name="Schneiker-Bekel S."/>
            <person name="Schulze K."/>
            <person name="Voerholter F.-J."/>
            <person name="Yevsa T."/>
            <person name="Engle J.T."/>
            <person name="Goldman W.E."/>
            <person name="Puehler A."/>
            <person name="Goebel U.B."/>
            <person name="Goesmann A."/>
            <person name="Bloecker H."/>
            <person name="Kaiser O."/>
            <person name="Martinez-Arias R."/>
        </authorList>
    </citation>
    <scope>NUCLEOTIDE SEQUENCE [LARGE SCALE GENOMIC DNA]</scope>
    <source>
        <strain>ATCC BAA-461 / DSM 12804 / CCUG 43448</strain>
    </source>
</reference>
<protein>
    <recommendedName>
        <fullName evidence="1">N-(5'-phosphoribosyl)anthranilate isomerase</fullName>
        <shortName evidence="1">PRAI</shortName>
        <ecNumber evidence="1">5.3.1.24</ecNumber>
    </recommendedName>
</protein>
<accession>A9IRJ9</accession>
<dbReference type="EC" id="5.3.1.24" evidence="1"/>
<dbReference type="EMBL" id="AM902716">
    <property type="protein sequence ID" value="CAP43184.1"/>
    <property type="molecule type" value="Genomic_DNA"/>
</dbReference>
<dbReference type="SMR" id="A9IRJ9"/>
<dbReference type="STRING" id="94624.Bpet2842"/>
<dbReference type="KEGG" id="bpt:Bpet2842"/>
<dbReference type="eggNOG" id="COG0135">
    <property type="taxonomic scope" value="Bacteria"/>
</dbReference>
<dbReference type="UniPathway" id="UPA00035">
    <property type="reaction ID" value="UER00042"/>
</dbReference>
<dbReference type="Proteomes" id="UP000001225">
    <property type="component" value="Chromosome"/>
</dbReference>
<dbReference type="GO" id="GO:0004640">
    <property type="term" value="F:phosphoribosylanthranilate isomerase activity"/>
    <property type="evidence" value="ECO:0007669"/>
    <property type="project" value="UniProtKB-UniRule"/>
</dbReference>
<dbReference type="GO" id="GO:0000162">
    <property type="term" value="P:L-tryptophan biosynthetic process"/>
    <property type="evidence" value="ECO:0007669"/>
    <property type="project" value="UniProtKB-UniRule"/>
</dbReference>
<dbReference type="CDD" id="cd00405">
    <property type="entry name" value="PRAI"/>
    <property type="match status" value="1"/>
</dbReference>
<dbReference type="Gene3D" id="3.20.20.70">
    <property type="entry name" value="Aldolase class I"/>
    <property type="match status" value="1"/>
</dbReference>
<dbReference type="HAMAP" id="MF_00135">
    <property type="entry name" value="PRAI"/>
    <property type="match status" value="1"/>
</dbReference>
<dbReference type="InterPro" id="IPR013785">
    <property type="entry name" value="Aldolase_TIM"/>
</dbReference>
<dbReference type="InterPro" id="IPR001240">
    <property type="entry name" value="PRAI_dom"/>
</dbReference>
<dbReference type="InterPro" id="IPR011060">
    <property type="entry name" value="RibuloseP-bd_barrel"/>
</dbReference>
<dbReference type="InterPro" id="IPR044643">
    <property type="entry name" value="TrpF_fam"/>
</dbReference>
<dbReference type="NCBIfam" id="NF002298">
    <property type="entry name" value="PRK01222.1-4"/>
    <property type="match status" value="1"/>
</dbReference>
<dbReference type="PANTHER" id="PTHR42894">
    <property type="entry name" value="N-(5'-PHOSPHORIBOSYL)ANTHRANILATE ISOMERASE"/>
    <property type="match status" value="1"/>
</dbReference>
<dbReference type="PANTHER" id="PTHR42894:SF1">
    <property type="entry name" value="N-(5'-PHOSPHORIBOSYL)ANTHRANILATE ISOMERASE"/>
    <property type="match status" value="1"/>
</dbReference>
<dbReference type="Pfam" id="PF00697">
    <property type="entry name" value="PRAI"/>
    <property type="match status" value="1"/>
</dbReference>
<dbReference type="SUPFAM" id="SSF51366">
    <property type="entry name" value="Ribulose-phoshate binding barrel"/>
    <property type="match status" value="1"/>
</dbReference>
<gene>
    <name evidence="1" type="primary">trpF</name>
    <name type="ordered locus">Bpet2842</name>
</gene>
<sequence>MRTRVKICGLTREADIASAVQAGADAIGFVFYPGSKRYVQPVLAARLRRTVPAFVDVVALFVNPAPADVQAVLDQVGPDLIQFHGDESAAECARYGTRFLRAFRTGAPGLDTPGNLAAACRAYDAAAGWLFDSYSAGYGGSGQAFDHALLAGVRADAAARPLILSGGLNAANVGTAIEACRPWAVDVSSGVETAPGEKSPDKIRALLDAVRQADDRLRGL</sequence>
<evidence type="ECO:0000255" key="1">
    <source>
        <dbReference type="HAMAP-Rule" id="MF_00135"/>
    </source>
</evidence>
<keyword id="KW-0028">Amino-acid biosynthesis</keyword>
<keyword id="KW-0057">Aromatic amino acid biosynthesis</keyword>
<keyword id="KW-0413">Isomerase</keyword>
<keyword id="KW-0822">Tryptophan biosynthesis</keyword>
<organism>
    <name type="scientific">Bordetella petrii (strain ATCC BAA-461 / DSM 12804 / CCUG 43448)</name>
    <dbReference type="NCBI Taxonomy" id="340100"/>
    <lineage>
        <taxon>Bacteria</taxon>
        <taxon>Pseudomonadati</taxon>
        <taxon>Pseudomonadota</taxon>
        <taxon>Betaproteobacteria</taxon>
        <taxon>Burkholderiales</taxon>
        <taxon>Alcaligenaceae</taxon>
        <taxon>Bordetella</taxon>
    </lineage>
</organism>
<proteinExistence type="inferred from homology"/>
<feature type="chain" id="PRO_1000095913" description="N-(5'-phosphoribosyl)anthranilate isomerase">
    <location>
        <begin position="1"/>
        <end position="220"/>
    </location>
</feature>
<comment type="catalytic activity">
    <reaction evidence="1">
        <text>N-(5-phospho-beta-D-ribosyl)anthranilate = 1-(2-carboxyphenylamino)-1-deoxy-D-ribulose 5-phosphate</text>
        <dbReference type="Rhea" id="RHEA:21540"/>
        <dbReference type="ChEBI" id="CHEBI:18277"/>
        <dbReference type="ChEBI" id="CHEBI:58613"/>
        <dbReference type="EC" id="5.3.1.24"/>
    </reaction>
</comment>
<comment type="pathway">
    <text evidence="1">Amino-acid biosynthesis; L-tryptophan biosynthesis; L-tryptophan from chorismate: step 3/5.</text>
</comment>
<comment type="similarity">
    <text evidence="1">Belongs to the TrpF family.</text>
</comment>
<name>TRPF_BORPD</name>